<organism>
    <name type="scientific">Chlorocebus aethiops</name>
    <name type="common">Green monkey</name>
    <name type="synonym">Cercopithecus aethiops</name>
    <dbReference type="NCBI Taxonomy" id="9534"/>
    <lineage>
        <taxon>Eukaryota</taxon>
        <taxon>Metazoa</taxon>
        <taxon>Chordata</taxon>
        <taxon>Craniata</taxon>
        <taxon>Vertebrata</taxon>
        <taxon>Euteleostomi</taxon>
        <taxon>Mammalia</taxon>
        <taxon>Eutheria</taxon>
        <taxon>Euarchontoglires</taxon>
        <taxon>Primates</taxon>
        <taxon>Haplorrhini</taxon>
        <taxon>Catarrhini</taxon>
        <taxon>Cercopithecidae</taxon>
        <taxon>Cercopithecinae</taxon>
        <taxon>Chlorocebus</taxon>
    </lineage>
</organism>
<proteinExistence type="evidence at transcript level"/>
<feature type="chain" id="PRO_0000219220" description="CD81 antigen">
    <location>
        <begin position="1"/>
        <end position="236"/>
    </location>
</feature>
<feature type="topological domain" description="Cytoplasmic" evidence="4">
    <location>
        <begin position="1"/>
        <end position="12"/>
    </location>
</feature>
<feature type="transmembrane region" description="Helical" evidence="2">
    <location>
        <begin position="13"/>
        <end position="33"/>
    </location>
</feature>
<feature type="topological domain" description="Extracellular" evidence="4">
    <location>
        <begin position="34"/>
        <end position="63"/>
    </location>
</feature>
<feature type="transmembrane region" description="Helical" evidence="2">
    <location>
        <begin position="64"/>
        <end position="84"/>
    </location>
</feature>
<feature type="topological domain" description="Cytoplasmic" evidence="4">
    <location>
        <begin position="85"/>
        <end position="89"/>
    </location>
</feature>
<feature type="transmembrane region" description="Helical" evidence="2">
    <location>
        <begin position="90"/>
        <end position="112"/>
    </location>
</feature>
<feature type="topological domain" description="Extracellular" evidence="4">
    <location>
        <begin position="113"/>
        <end position="201"/>
    </location>
</feature>
<feature type="transmembrane region" description="Helical" evidence="2">
    <location>
        <begin position="202"/>
        <end position="224"/>
    </location>
</feature>
<feature type="topological domain" description="Cytoplasmic" evidence="4">
    <location>
        <begin position="225"/>
        <end position="236"/>
    </location>
</feature>
<feature type="binding site" evidence="2">
    <location>
        <position position="219"/>
    </location>
    <ligand>
        <name>cholesterol</name>
        <dbReference type="ChEBI" id="CHEBI:16113"/>
    </ligand>
</feature>
<feature type="site" description="Important for interaction with integrin" evidence="2">
    <location>
        <position position="116"/>
    </location>
</feature>
<feature type="site" description="Important for interaction with integrin" evidence="2">
    <location>
        <position position="144"/>
    </location>
</feature>
<feature type="site" description="Important for interaction with integrin" evidence="2">
    <location>
        <position position="148"/>
    </location>
</feature>
<feature type="disulfide bond" evidence="2">
    <location>
        <begin position="156"/>
        <end position="190"/>
    </location>
</feature>
<feature type="disulfide bond" evidence="2">
    <location>
        <begin position="157"/>
        <end position="175"/>
    </location>
</feature>
<reference key="1">
    <citation type="submission" date="1998-12" db="EMBL/GenBank/DDBJ databases">
        <title>African green monkey CD81 cDNA.</title>
        <authorList>
            <person name="Levy S."/>
            <person name="Kuo C.C."/>
        </authorList>
    </citation>
    <scope>NUCLEOTIDE SEQUENCE [MRNA]</scope>
</reference>
<dbReference type="EMBL" id="AF116599">
    <property type="protein sequence ID" value="AAD11439.1"/>
    <property type="molecule type" value="mRNA"/>
</dbReference>
<dbReference type="SMR" id="O97703"/>
<dbReference type="GO" id="GO:0016323">
    <property type="term" value="C:basolateral plasma membrane"/>
    <property type="evidence" value="ECO:0007669"/>
    <property type="project" value="UniProtKB-SubCell"/>
</dbReference>
<dbReference type="GO" id="GO:0001772">
    <property type="term" value="C:immunological synapse"/>
    <property type="evidence" value="ECO:0000250"/>
    <property type="project" value="UniProtKB"/>
</dbReference>
<dbReference type="GO" id="GO:0016020">
    <property type="term" value="C:membrane"/>
    <property type="evidence" value="ECO:0000250"/>
    <property type="project" value="UniProtKB"/>
</dbReference>
<dbReference type="GO" id="GO:0005886">
    <property type="term" value="C:plasma membrane"/>
    <property type="evidence" value="ECO:0000250"/>
    <property type="project" value="UniProtKB"/>
</dbReference>
<dbReference type="GO" id="GO:0097197">
    <property type="term" value="C:tetraspanin-enriched microdomain"/>
    <property type="evidence" value="ECO:0000250"/>
    <property type="project" value="UniProtKB"/>
</dbReference>
<dbReference type="GO" id="GO:0015485">
    <property type="term" value="F:cholesterol binding"/>
    <property type="evidence" value="ECO:0000250"/>
    <property type="project" value="UniProtKB"/>
</dbReference>
<dbReference type="GO" id="GO:0005178">
    <property type="term" value="F:integrin binding"/>
    <property type="evidence" value="ECO:0000250"/>
    <property type="project" value="UniProtKB"/>
</dbReference>
<dbReference type="GO" id="GO:0035783">
    <property type="term" value="P:CD4-positive, alpha-beta T cell costimulation"/>
    <property type="evidence" value="ECO:0000250"/>
    <property type="project" value="UniProtKB"/>
</dbReference>
<dbReference type="GO" id="GO:0071404">
    <property type="term" value="P:cellular response to low-density lipoprotein particle stimulus"/>
    <property type="evidence" value="ECO:0000250"/>
    <property type="project" value="UniProtKB"/>
</dbReference>
<dbReference type="GO" id="GO:0002455">
    <property type="term" value="P:humoral immune response mediated by circulating immunoglobulin"/>
    <property type="evidence" value="ECO:0000250"/>
    <property type="project" value="UniProtKB"/>
</dbReference>
<dbReference type="GO" id="GO:0001771">
    <property type="term" value="P:immunological synapse formation"/>
    <property type="evidence" value="ECO:0000250"/>
    <property type="project" value="UniProtKB"/>
</dbReference>
<dbReference type="GO" id="GO:0034238">
    <property type="term" value="P:macrophage fusion"/>
    <property type="evidence" value="ECO:0000250"/>
    <property type="project" value="UniProtKB"/>
</dbReference>
<dbReference type="GO" id="GO:0014905">
    <property type="term" value="P:myoblast fusion involved in skeletal muscle regeneration"/>
    <property type="evidence" value="ECO:0000250"/>
    <property type="project" value="UniProtKB"/>
</dbReference>
<dbReference type="GO" id="GO:0072675">
    <property type="term" value="P:osteoclast fusion"/>
    <property type="evidence" value="ECO:0000250"/>
    <property type="project" value="UniProtKB"/>
</dbReference>
<dbReference type="GO" id="GO:0050871">
    <property type="term" value="P:positive regulation of B cell activation"/>
    <property type="evidence" value="ECO:0000250"/>
    <property type="project" value="UniProtKB"/>
</dbReference>
<dbReference type="GO" id="GO:0050861">
    <property type="term" value="P:positive regulation of B cell receptor signaling pathway"/>
    <property type="evidence" value="ECO:0000250"/>
    <property type="project" value="UniProtKB"/>
</dbReference>
<dbReference type="GO" id="GO:2000563">
    <property type="term" value="P:positive regulation of CD4-positive, alpha-beta T cell proliferation"/>
    <property type="evidence" value="ECO:0000250"/>
    <property type="project" value="UniProtKB"/>
</dbReference>
<dbReference type="GO" id="GO:0002863">
    <property type="term" value="P:positive regulation of inflammatory response to antigenic stimulus"/>
    <property type="evidence" value="ECO:0000250"/>
    <property type="project" value="UniProtKB"/>
</dbReference>
<dbReference type="GO" id="GO:0043410">
    <property type="term" value="P:positive regulation of MAPK cascade"/>
    <property type="evidence" value="ECO:0000250"/>
    <property type="project" value="UniProtKB"/>
</dbReference>
<dbReference type="GO" id="GO:0070863">
    <property type="term" value="P:positive regulation of protein exit from endoplasmic reticulum"/>
    <property type="evidence" value="ECO:0000250"/>
    <property type="project" value="UniProtKB"/>
</dbReference>
<dbReference type="GO" id="GO:1903911">
    <property type="term" value="P:positive regulation of receptor clustering"/>
    <property type="evidence" value="ECO:0000250"/>
    <property type="project" value="UniProtKB"/>
</dbReference>
<dbReference type="GO" id="GO:2001190">
    <property type="term" value="P:positive regulation of T cell activation via T cell receptor contact with antigen bound to MHC molecule on antigen presenting cell"/>
    <property type="evidence" value="ECO:0000250"/>
    <property type="project" value="UniProtKB"/>
</dbReference>
<dbReference type="GO" id="GO:0050862">
    <property type="term" value="P:positive regulation of T cell receptor signaling pathway"/>
    <property type="evidence" value="ECO:0000250"/>
    <property type="project" value="UniProtKB"/>
</dbReference>
<dbReference type="GO" id="GO:2000553">
    <property type="term" value="P:positive regulation of T-helper 2 cell cytokine production"/>
    <property type="evidence" value="ECO:0000250"/>
    <property type="project" value="UniProtKB"/>
</dbReference>
<dbReference type="GO" id="GO:0072659">
    <property type="term" value="P:protein localization to plasma membrane"/>
    <property type="evidence" value="ECO:0000250"/>
    <property type="project" value="UniProtKB"/>
</dbReference>
<dbReference type="GO" id="GO:0031623">
    <property type="term" value="P:receptor internalization"/>
    <property type="evidence" value="ECO:0000250"/>
    <property type="project" value="UniProtKB"/>
</dbReference>
<dbReference type="GO" id="GO:1905521">
    <property type="term" value="P:regulation of macrophage migration"/>
    <property type="evidence" value="ECO:0000250"/>
    <property type="project" value="UniProtKB"/>
</dbReference>
<dbReference type="CDD" id="cd03151">
    <property type="entry name" value="CD81_like_LEL"/>
    <property type="match status" value="1"/>
</dbReference>
<dbReference type="FunFam" id="1.10.1450.10:FF:000010">
    <property type="entry name" value="Tetraspanin"/>
    <property type="match status" value="1"/>
</dbReference>
<dbReference type="Gene3D" id="1.10.1450.10">
    <property type="entry name" value="Tetraspanin"/>
    <property type="match status" value="1"/>
</dbReference>
<dbReference type="InterPro" id="IPR018499">
    <property type="entry name" value="Tetraspanin/Peripherin"/>
</dbReference>
<dbReference type="InterPro" id="IPR000301">
    <property type="entry name" value="Tetraspanin_animals"/>
</dbReference>
<dbReference type="InterPro" id="IPR018503">
    <property type="entry name" value="Tetraspanin_CS"/>
</dbReference>
<dbReference type="InterPro" id="IPR008952">
    <property type="entry name" value="Tetraspanin_EC2_sf"/>
</dbReference>
<dbReference type="PANTHER" id="PTHR19282:SF214">
    <property type="entry name" value="CD81 ANTIGEN"/>
    <property type="match status" value="1"/>
</dbReference>
<dbReference type="PANTHER" id="PTHR19282">
    <property type="entry name" value="TETRASPANIN"/>
    <property type="match status" value="1"/>
</dbReference>
<dbReference type="Pfam" id="PF00335">
    <property type="entry name" value="Tetraspanin"/>
    <property type="match status" value="1"/>
</dbReference>
<dbReference type="PIRSF" id="PIRSF002419">
    <property type="entry name" value="Tetraspanin"/>
    <property type="match status" value="1"/>
</dbReference>
<dbReference type="PRINTS" id="PR00259">
    <property type="entry name" value="TMFOUR"/>
</dbReference>
<dbReference type="SUPFAM" id="SSF48652">
    <property type="entry name" value="Tetraspanin"/>
    <property type="match status" value="1"/>
</dbReference>
<dbReference type="PROSITE" id="PS00421">
    <property type="entry name" value="TM4_1"/>
    <property type="match status" value="1"/>
</dbReference>
<accession>O97703</accession>
<keyword id="KW-1064">Adaptive immunity</keyword>
<keyword id="KW-1003">Cell membrane</keyword>
<keyword id="KW-1015">Disulfide bond</keyword>
<keyword id="KW-0391">Immunity</keyword>
<keyword id="KW-0446">Lipid-binding</keyword>
<keyword id="KW-0472">Membrane</keyword>
<keyword id="KW-0812">Transmembrane</keyword>
<keyword id="KW-1133">Transmembrane helix</keyword>
<gene>
    <name type="primary">CD81</name>
</gene>
<evidence type="ECO:0000250" key="1">
    <source>
        <dbReference type="UniProtKB" id="P35762"/>
    </source>
</evidence>
<evidence type="ECO:0000250" key="2">
    <source>
        <dbReference type="UniProtKB" id="P60033"/>
    </source>
</evidence>
<evidence type="ECO:0000255" key="3"/>
<evidence type="ECO:0000305" key="4"/>
<sequence>MGVEGCTKCIKYLLFVFNFVFWLAGGVILGVALWLRHDPQTTNLLYLELGDKPAPNTFYVGIYILIAVGAVMMFVGFLGCYGAIQESQCLLGTFFTCLVILFACEVAAGIWGFVNKDQIAKDVKQFYDQALQQAVVDDDANNAKAVVKTFHETLDCCGSSTLAALTTSVLKNNLCPSGSNIISNLLKKDCHQKIDELFSGKLYLIGIAAIVVAVIMIFEMILSMVLCCGIRNSSVY</sequence>
<comment type="function">
    <text evidence="1 2">Structural component of specialized membrane microdomains known as tetraspanin-enriched microdomains (TERMs), which act as platforms for receptor clustering and signaling. Essential for trafficking and compartmentalization of CD19 receptor on the surface of activated B cells. Upon initial encounter with microbial pathogens, enables the assembly of CD19-CR2/CD21 and B cell receptor (BCR) complexes at signaling TERMs, lowering the threshold dose of antigen required to trigger B cell clonal expansion and antibody production. In T cells, facilitates the localization of CD247/CD3 zeta at antigen-induced synapses with B cells, providing for costimulation and polarization toward T helper type 2 phenotype. Present in MHC class II compartments, may also play a role in antigen presentation (By similarity). Can act both as positive and negative regulator of homotypic or heterotypic cell-cell fusion processes. Positively regulates sperm-egg fusion and may be involved in acrosome reaction. In myoblasts, associates with CD9 and PTGFRN and inhibits myotube fusion during muscle regeneration (By similarity). In macrophages, associates with CD9 and beta-1 and beta-2 integrins, and prevents macrophage fusion into multinucleated giant cells specialized in ingesting complement-opsonized large particles (By similarity). Also prevents the fusion of mononuclear cell progenitors into osteoclasts in charge of bone resorption (By similarity). May regulate the compartmentalization of enzymatic activities. In T cells, defines the subcellular localization of dNTPase SAMHD1 and permits its degradation by the proteasome, thereby controlling intracellular dNTP levels (By similarity). Also involved in cell adhesion and motility. Positively regulates integrin-mediated adhesion of macrophages, particularly relevant for the inflammatory response in the lung (By similarity).</text>
</comment>
<comment type="subunit">
    <text evidence="1 2">Homodimer. Part of a complex composed of CD19, CR2/CD21, CD81 and IFITM1/CD225 in the membrane of mature B cells. Interacts (via the second extracellular domain) with CD19; this interaction is initiated early during biosynthesis in the ER and enables trafficking of only properly folded CD19. Part of a complex that includes MHC class II/HLA-DR molecules and IFITM1. Interacts with IFITM1 (By similarity). Interacts with IFITM2 and IFITM3 (By similarity). Part of integrin-tetraspanin complex composed of CD9, CD81, beta-1 and beta-2 integrins in the membrane of monocyte/macrophages. Interacts (via the second extracellular domain) with integrin ITGAV:ITGB3. Interacts with CD247/CD3 zeta, ICAM1 and CD9 at the immune synapse on T cell membrane (By similarity). Part of a GPCR-tetraspanin complex consisting at least of ADGRG1, CD81, possibly CD9, and GNA11 in which CD81 enhances the association of ADGRG1 with GNA11. Part of a complex composed of CD9, CD81, PTGFRN and IGSF8 (By similarity). Interacts directly with IGSF8. Interacts with CD53 and SCIMP. Interacts with SAMHD1 (via its C-terminus) (By similarity). Interacts with glypican GPC3 and with the transcriptional repressor HHEX; binding to GPC3 decreases the availability of free CD81 for binding to HHEX, resulting in nuclear translocation of HHEX and transcriptional repression (By similarity). Interacts with CLDN1. Interacts with CLDN6 and CLDN9 (By similarity).</text>
</comment>
<comment type="subcellular location">
    <subcellularLocation>
        <location evidence="1">Cell membrane</location>
        <topology evidence="3">Multi-pass membrane protein</topology>
    </subcellularLocation>
    <subcellularLocation>
        <location evidence="2">Basolateral cell membrane</location>
        <topology evidence="3">Multi-pass membrane protein</topology>
    </subcellularLocation>
    <text evidence="2">Associates with CLDN1 and the CLDN1-CD81 complex localizes to the basolateral cell membrane.</text>
</comment>
<comment type="domain">
    <text evidence="2">Binds cholesterol in a cavity lined by the transmembrane spans.</text>
</comment>
<comment type="PTM">
    <text evidence="4">Not glycosylated.</text>
</comment>
<comment type="PTM">
    <text evidence="2">Likely constitutively palmitoylated at low levels. Protein palmitoylation is up-regulated upon coligation of BCR and CD9-C2R-CD81 complexes in lipid rafts.</text>
</comment>
<comment type="similarity">
    <text evidence="4">Belongs to the tetraspanin (TM4SF) family.</text>
</comment>
<protein>
    <recommendedName>
        <fullName>CD81 antigen</fullName>
    </recommendedName>
    <cdAntigenName>CD81</cdAntigenName>
</protein>
<name>CD81_CHLAE</name>